<keyword id="KW-0032">Aminotransferase</keyword>
<keyword id="KW-0663">Pyridoxal phosphate</keyword>
<keyword id="KW-0808">Transferase</keyword>
<evidence type="ECO:0000255" key="1">
    <source>
        <dbReference type="HAMAP-Rule" id="MF_01513"/>
    </source>
</evidence>
<gene>
    <name evidence="1" type="primary">pat</name>
    <name type="ordered locus">BCG_3833</name>
</gene>
<feature type="chain" id="PRO_1000024495" description="Aromatic amino acid aminotransferase">
    <location>
        <begin position="1"/>
        <end position="353"/>
    </location>
</feature>
<feature type="modified residue" description="N6-(pyridoxal phosphate)lysine" evidence="1">
    <location>
        <position position="217"/>
    </location>
</feature>
<comment type="function">
    <text evidence="1">Aminotransferase that catalyzes the conversion of aromatic amino acids and 2-oxoglutarate into corresponding aromatic oxo acids and L-glutamate.</text>
</comment>
<comment type="catalytic activity">
    <reaction evidence="1">
        <text>an aromatic L-alpha-amino acid + 2-oxoglutarate = an aromatic oxo-acid + L-glutamate</text>
        <dbReference type="Rhea" id="RHEA:17533"/>
        <dbReference type="ChEBI" id="CHEBI:16810"/>
        <dbReference type="ChEBI" id="CHEBI:29985"/>
        <dbReference type="ChEBI" id="CHEBI:73309"/>
        <dbReference type="ChEBI" id="CHEBI:84824"/>
        <dbReference type="EC" id="2.6.1.57"/>
    </reaction>
</comment>
<comment type="cofactor">
    <cofactor evidence="1">
        <name>pyridoxal 5'-phosphate</name>
        <dbReference type="ChEBI" id="CHEBI:597326"/>
    </cofactor>
</comment>
<comment type="subunit">
    <text evidence="1">Homodimer.</text>
</comment>
<comment type="similarity">
    <text evidence="1">Belongs to the class-II pyridoxal-phosphate-dependent aminotransferase family.</text>
</comment>
<dbReference type="EC" id="2.6.1.57" evidence="1"/>
<dbReference type="EMBL" id="AM408590">
    <property type="protein sequence ID" value="CAL73823.1"/>
    <property type="molecule type" value="Genomic_DNA"/>
</dbReference>
<dbReference type="SMR" id="A1KQA5"/>
<dbReference type="KEGG" id="mbb:BCG_3833"/>
<dbReference type="HOGENOM" id="CLU_017584_3_3_11"/>
<dbReference type="Proteomes" id="UP000001472">
    <property type="component" value="Chromosome"/>
</dbReference>
<dbReference type="GO" id="GO:0008793">
    <property type="term" value="F:aromatic-amino-acid transaminase activity"/>
    <property type="evidence" value="ECO:0007669"/>
    <property type="project" value="UniProtKB-UniRule"/>
</dbReference>
<dbReference type="GO" id="GO:0004400">
    <property type="term" value="F:histidinol-phosphate transaminase activity"/>
    <property type="evidence" value="ECO:0007669"/>
    <property type="project" value="InterPro"/>
</dbReference>
<dbReference type="GO" id="GO:0030170">
    <property type="term" value="F:pyridoxal phosphate binding"/>
    <property type="evidence" value="ECO:0007669"/>
    <property type="project" value="UniProtKB-UniRule"/>
</dbReference>
<dbReference type="GO" id="GO:0000105">
    <property type="term" value="P:L-histidine biosynthetic process"/>
    <property type="evidence" value="ECO:0007669"/>
    <property type="project" value="InterPro"/>
</dbReference>
<dbReference type="CDD" id="cd00609">
    <property type="entry name" value="AAT_like"/>
    <property type="match status" value="1"/>
</dbReference>
<dbReference type="Gene3D" id="3.90.1150.10">
    <property type="entry name" value="Aspartate Aminotransferase, domain 1"/>
    <property type="match status" value="1"/>
</dbReference>
<dbReference type="Gene3D" id="3.40.640.10">
    <property type="entry name" value="Type I PLP-dependent aspartate aminotransferase-like (Major domain)"/>
    <property type="match status" value="1"/>
</dbReference>
<dbReference type="HAMAP" id="MF_01023">
    <property type="entry name" value="HisC_aminotrans_2"/>
    <property type="match status" value="1"/>
</dbReference>
<dbReference type="HAMAP" id="MF_01513">
    <property type="entry name" value="Phe_aminotrans_2"/>
    <property type="match status" value="1"/>
</dbReference>
<dbReference type="InterPro" id="IPR001917">
    <property type="entry name" value="Aminotrans_II_pyridoxalP_BS"/>
</dbReference>
<dbReference type="InterPro" id="IPR004839">
    <property type="entry name" value="Aminotransferase_I/II_large"/>
</dbReference>
<dbReference type="InterPro" id="IPR024892">
    <property type="entry name" value="ArAT"/>
</dbReference>
<dbReference type="InterPro" id="IPR005861">
    <property type="entry name" value="HisP_aminotrans"/>
</dbReference>
<dbReference type="InterPro" id="IPR050106">
    <property type="entry name" value="HistidinolP_aminotransfase"/>
</dbReference>
<dbReference type="InterPro" id="IPR015424">
    <property type="entry name" value="PyrdxlP-dep_Trfase"/>
</dbReference>
<dbReference type="InterPro" id="IPR015421">
    <property type="entry name" value="PyrdxlP-dep_Trfase_major"/>
</dbReference>
<dbReference type="InterPro" id="IPR015422">
    <property type="entry name" value="PyrdxlP-dep_Trfase_small"/>
</dbReference>
<dbReference type="NCBIfam" id="NF002878">
    <property type="entry name" value="PRK03321.1"/>
    <property type="match status" value="1"/>
</dbReference>
<dbReference type="PANTHER" id="PTHR43643:SF3">
    <property type="entry name" value="HISTIDINOL-PHOSPHATE AMINOTRANSFERASE"/>
    <property type="match status" value="1"/>
</dbReference>
<dbReference type="PANTHER" id="PTHR43643">
    <property type="entry name" value="HISTIDINOL-PHOSPHATE AMINOTRANSFERASE 2"/>
    <property type="match status" value="1"/>
</dbReference>
<dbReference type="Pfam" id="PF00155">
    <property type="entry name" value="Aminotran_1_2"/>
    <property type="match status" value="1"/>
</dbReference>
<dbReference type="SUPFAM" id="SSF53383">
    <property type="entry name" value="PLP-dependent transferases"/>
    <property type="match status" value="1"/>
</dbReference>
<dbReference type="PROSITE" id="PS00599">
    <property type="entry name" value="AA_TRANSFER_CLASS_2"/>
    <property type="match status" value="1"/>
</dbReference>
<accession>A1KQA5</accession>
<proteinExistence type="inferred from homology"/>
<protein>
    <recommendedName>
        <fullName evidence="1">Aromatic amino acid aminotransferase</fullName>
        <shortName evidence="1">ArAT</shortName>
        <ecNumber evidence="1">2.6.1.57</ecNumber>
    </recommendedName>
</protein>
<reference key="1">
    <citation type="journal article" date="2007" name="Proc. Natl. Acad. Sci. U.S.A.">
        <title>Genome plasticity of BCG and impact on vaccine efficacy.</title>
        <authorList>
            <person name="Brosch R."/>
            <person name="Gordon S.V."/>
            <person name="Garnier T."/>
            <person name="Eiglmeier K."/>
            <person name="Frigui W."/>
            <person name="Valenti P."/>
            <person name="Dos Santos S."/>
            <person name="Duthoy S."/>
            <person name="Lacroix C."/>
            <person name="Garcia-Pelayo C."/>
            <person name="Inwald J.K."/>
            <person name="Golby P."/>
            <person name="Garcia J.N."/>
            <person name="Hewinson R.G."/>
            <person name="Behr M.A."/>
            <person name="Quail M.A."/>
            <person name="Churcher C."/>
            <person name="Barrell B.G."/>
            <person name="Parkhill J."/>
            <person name="Cole S.T."/>
        </authorList>
    </citation>
    <scope>NUCLEOTIDE SEQUENCE [LARGE SCALE GENOMIC DNA]</scope>
    <source>
        <strain>BCG / Pasteur 1173P2</strain>
    </source>
</reference>
<organism>
    <name type="scientific">Mycobacterium bovis (strain BCG / Pasteur 1173P2)</name>
    <dbReference type="NCBI Taxonomy" id="410289"/>
    <lineage>
        <taxon>Bacteria</taxon>
        <taxon>Bacillati</taxon>
        <taxon>Actinomycetota</taxon>
        <taxon>Actinomycetes</taxon>
        <taxon>Mycobacteriales</taxon>
        <taxon>Mycobacteriaceae</taxon>
        <taxon>Mycobacterium</taxon>
        <taxon>Mycobacterium tuberculosis complex</taxon>
    </lineage>
</organism>
<sequence length="353" mass="38009">MTARLRPELAGLPVYVPGKTVPGAIKLASNETVFGPLPSVRAAIDRATDTVNRYPDNGCVQLKAALARHLGPDFAPEHVAVGCGSVSLCQQLVQVTASVGDEVVFGWRSFELYPPQVRVAGAIPIQVPLTDHTFDLYAMLAAVTDRTRLIFVCNPNNPTSTVVGPDALARFVEAVPAHILIAIDEAYVEYIRDGMRPDSLGLVRAHNNVVVLRTFSKAYGLAGLRIGYAIGHPDVITALDKVYVPFTVSSIGQAAAIASLDAADELLARTDTVVAERARVSAELRAAGFTLPPSQANFVWLPLGSRTQDFVEQAADARIVVRPYGTDGVRVTVAAPEENDAFLRFARRWRSDQ</sequence>
<name>PATR_MYCBP</name>